<reference key="1">
    <citation type="journal article" date="1998" name="Virology">
        <title>Characterization of rhesus cytomegalovirus genes associated with anti-viral susceptibility.</title>
        <authorList>
            <person name="Swanson R."/>
            <person name="Bergquam E."/>
            <person name="Wong S.W."/>
        </authorList>
    </citation>
    <scope>NUCLEOTIDE SEQUENCE [GENOMIC DNA]</scope>
</reference>
<evidence type="ECO:0000305" key="1"/>
<sequence>MFFNPYLSGARKPPNLVAKRSVAKTFLEIVPRGAMHDGQSGLIKHKTGRGAIMFYRDIKHVLENDMAWPCPLPAPPPSIEAFARRLMGPLKFHTYDQVDGVLTHDTQECLSPRYRHHITPSGNVLRFFGATEQGHSICVNVFGQRSYFYCEYADGDLLRDLLASVSDLVSEPRMAYALTITPVQKMSIYGYGTSPIPNLFRVSISNWSMAKKIGEYLLENGIPVYEIRVDPLTRLVIDKKMTTFGWCCVHRYEWRTHKSSTCDFEIDCDVADIMAVSDDTSWPVYRCLSFDIECMSASGGFPAAEQTDDIVIQISCVCYNTGGTGCEENTVFGTSGLHLFTIGSCAPLAGVDVYEFPSEYEMLLGFLIFFQRYSPCFVTGYNINSFDFKYILTRLEFVYKLSPGPYSKLPAQGRFSMYSPLKKFVTTTTTKVFISGTVVIDMYPVCMAKTSSPNYKLNTMAELYLKQQKEDMSYKDIPVKFISGCEGRAQVGKYCVQDAVLVKDLFNTINFHYEAGAIARLARIPMRRVIFDGQQIRIYTSLLDECACRDFIMPNHKGADNSSEPTDVSYQGATVFEPEVGYYSDPVVVFDFASLYPSIIMAHNLCYSTFVAPGGESPPESDVLTVELESGLSYRFVKNTVRNSVLSELLTKWVSQRRAVRETMRSCHDPVKRMLLDKEQLALKVTCNAFYGFTGVVNGMMPCLPIAASITRIGRDMLMRTSQFVEENFAEPCFLHNFFNREDYSGDPVAVKVIYGDTDSVFVCYRGVTAAALIERGPSLAHYITQCLFVDPIKLEFEKVFGSLMMICKKRYIGKIVGETELSMKGVDLVRKTSCEFVKNVTRDIIQLLFDDPEVSRAAVQLSRLTLDELKMQGVPPGFGRVIQRLSQARDELYTSRARVEELVLSSVLSKDVSLYKQSNLPHIAVIKRLAARSEELPVVGDRVFYVLTAPVDGRSSGVRNYEIAEDPTYVREHGVPIHADKYFDQVIKSVTNVLSPVFPPQTLRKDKFLLGILPHRIYLEPSFLPYCVKASEHC</sequence>
<protein>
    <recommendedName>
        <fullName>DNA polymerase catalytic subunit</fullName>
        <ecNumber>2.7.7.7</ecNumber>
    </recommendedName>
</protein>
<name>DPOL_RHCM6</name>
<keyword id="KW-0235">DNA replication</keyword>
<keyword id="KW-0238">DNA-binding</keyword>
<keyword id="KW-0239">DNA-directed DNA polymerase</keyword>
<keyword id="KW-1048">Host nucleus</keyword>
<keyword id="KW-0548">Nucleotidyltransferase</keyword>
<keyword id="KW-0808">Transferase</keyword>
<keyword id="KW-1194">Viral DNA replication</keyword>
<organismHost>
    <name type="scientific">Macaca mulatta</name>
    <name type="common">Rhesus macaque</name>
    <dbReference type="NCBI Taxonomy" id="9544"/>
</organismHost>
<gene>
    <name type="primary">UL54</name>
</gene>
<dbReference type="EC" id="2.7.7.7"/>
<dbReference type="EMBL" id="AF033184">
    <property type="protein sequence ID" value="AAC05256.1"/>
    <property type="molecule type" value="Genomic_DNA"/>
</dbReference>
<dbReference type="RefSeq" id="YP_068180.1">
    <property type="nucleotide sequence ID" value="NC_006150.1"/>
</dbReference>
<dbReference type="SMR" id="O71121"/>
<dbReference type="KEGG" id="vg:2952813"/>
<dbReference type="OrthoDB" id="165at10239"/>
<dbReference type="GO" id="GO:0042025">
    <property type="term" value="C:host cell nucleus"/>
    <property type="evidence" value="ECO:0007669"/>
    <property type="project" value="UniProtKB-SubCell"/>
</dbReference>
<dbReference type="GO" id="GO:0003677">
    <property type="term" value="F:DNA binding"/>
    <property type="evidence" value="ECO:0007669"/>
    <property type="project" value="UniProtKB-KW"/>
</dbReference>
<dbReference type="GO" id="GO:0003887">
    <property type="term" value="F:DNA-directed DNA polymerase activity"/>
    <property type="evidence" value="ECO:0007669"/>
    <property type="project" value="UniProtKB-KW"/>
</dbReference>
<dbReference type="GO" id="GO:0000166">
    <property type="term" value="F:nucleotide binding"/>
    <property type="evidence" value="ECO:0007669"/>
    <property type="project" value="InterPro"/>
</dbReference>
<dbReference type="GO" id="GO:0006261">
    <property type="term" value="P:DNA-templated DNA replication"/>
    <property type="evidence" value="ECO:0007669"/>
    <property type="project" value="TreeGrafter"/>
</dbReference>
<dbReference type="GO" id="GO:0039693">
    <property type="term" value="P:viral DNA genome replication"/>
    <property type="evidence" value="ECO:0007669"/>
    <property type="project" value="UniProtKB-KW"/>
</dbReference>
<dbReference type="Gene3D" id="1.10.132.60">
    <property type="entry name" value="DNA polymerase family B, C-terminal domain"/>
    <property type="match status" value="1"/>
</dbReference>
<dbReference type="Gene3D" id="3.30.342.10">
    <property type="entry name" value="DNA Polymerase, chain B, domain 1"/>
    <property type="match status" value="1"/>
</dbReference>
<dbReference type="Gene3D" id="1.10.287.690">
    <property type="entry name" value="Helix hairpin bin"/>
    <property type="match status" value="1"/>
</dbReference>
<dbReference type="Gene3D" id="3.90.1600.10">
    <property type="entry name" value="Palm domain of DNA polymerase"/>
    <property type="match status" value="1"/>
</dbReference>
<dbReference type="Gene3D" id="3.30.420.10">
    <property type="entry name" value="Ribonuclease H-like superfamily/Ribonuclease H"/>
    <property type="match status" value="1"/>
</dbReference>
<dbReference type="InterPro" id="IPR006172">
    <property type="entry name" value="DNA-dir_DNA_pol_B"/>
</dbReference>
<dbReference type="InterPro" id="IPR017964">
    <property type="entry name" value="DNA-dir_DNA_pol_B_CS"/>
</dbReference>
<dbReference type="InterPro" id="IPR006133">
    <property type="entry name" value="DNA-dir_DNA_pol_B_exonuc"/>
</dbReference>
<dbReference type="InterPro" id="IPR006134">
    <property type="entry name" value="DNA-dir_DNA_pol_B_multi_dom"/>
</dbReference>
<dbReference type="InterPro" id="IPR043502">
    <property type="entry name" value="DNA/RNA_pol_sf"/>
</dbReference>
<dbReference type="InterPro" id="IPR042087">
    <property type="entry name" value="DNA_pol_B_thumb"/>
</dbReference>
<dbReference type="InterPro" id="IPR023211">
    <property type="entry name" value="DNA_pol_palm_dom_sf"/>
</dbReference>
<dbReference type="InterPro" id="IPR050240">
    <property type="entry name" value="DNA_pol_type-B"/>
</dbReference>
<dbReference type="InterPro" id="IPR012337">
    <property type="entry name" value="RNaseH-like_sf"/>
</dbReference>
<dbReference type="InterPro" id="IPR036397">
    <property type="entry name" value="RNaseH_sf"/>
</dbReference>
<dbReference type="PANTHER" id="PTHR10322">
    <property type="entry name" value="DNA POLYMERASE CATALYTIC SUBUNIT"/>
    <property type="match status" value="1"/>
</dbReference>
<dbReference type="PANTHER" id="PTHR10322:SF23">
    <property type="entry name" value="DNA POLYMERASE DELTA CATALYTIC SUBUNIT"/>
    <property type="match status" value="1"/>
</dbReference>
<dbReference type="Pfam" id="PF00136">
    <property type="entry name" value="DNA_pol_B"/>
    <property type="match status" value="1"/>
</dbReference>
<dbReference type="Pfam" id="PF03104">
    <property type="entry name" value="DNA_pol_B_exo1"/>
    <property type="match status" value="1"/>
</dbReference>
<dbReference type="PRINTS" id="PR00106">
    <property type="entry name" value="DNAPOLB"/>
</dbReference>
<dbReference type="SMART" id="SM00486">
    <property type="entry name" value="POLBc"/>
    <property type="match status" value="1"/>
</dbReference>
<dbReference type="SUPFAM" id="SSF56672">
    <property type="entry name" value="DNA/RNA polymerases"/>
    <property type="match status" value="1"/>
</dbReference>
<dbReference type="SUPFAM" id="SSF53098">
    <property type="entry name" value="Ribonuclease H-like"/>
    <property type="match status" value="1"/>
</dbReference>
<dbReference type="PROSITE" id="PS00116">
    <property type="entry name" value="DNA_POLYMERASE_B"/>
    <property type="match status" value="1"/>
</dbReference>
<feature type="chain" id="PRO_0000046510" description="DNA polymerase catalytic subunit">
    <location>
        <begin position="1"/>
        <end position="1035"/>
    </location>
</feature>
<organism>
    <name type="scientific">Rhesus cytomegalovirus (strain 68-1)</name>
    <name type="common">RhCMV</name>
    <dbReference type="NCBI Taxonomy" id="47929"/>
    <lineage>
        <taxon>Viruses</taxon>
        <taxon>Duplodnaviria</taxon>
        <taxon>Heunggongvirae</taxon>
        <taxon>Peploviricota</taxon>
        <taxon>Herviviricetes</taxon>
        <taxon>Herpesvirales</taxon>
        <taxon>Orthoherpesviridae</taxon>
        <taxon>Betaherpesvirinae</taxon>
        <taxon>Cytomegalovirus</taxon>
        <taxon>Cytomegalovirus macacinebeta3</taxon>
    </lineage>
</organism>
<accession>O71121</accession>
<comment type="catalytic activity">
    <reaction>
        <text>DNA(n) + a 2'-deoxyribonucleoside 5'-triphosphate = DNA(n+1) + diphosphate</text>
        <dbReference type="Rhea" id="RHEA:22508"/>
        <dbReference type="Rhea" id="RHEA-COMP:17339"/>
        <dbReference type="Rhea" id="RHEA-COMP:17340"/>
        <dbReference type="ChEBI" id="CHEBI:33019"/>
        <dbReference type="ChEBI" id="CHEBI:61560"/>
        <dbReference type="ChEBI" id="CHEBI:173112"/>
        <dbReference type="EC" id="2.7.7.7"/>
    </reaction>
</comment>
<comment type="subcellular location">
    <subcellularLocation>
        <location>Host nucleus</location>
    </subcellularLocation>
</comment>
<comment type="similarity">
    <text evidence="1">Belongs to the DNA polymerase type-B family.</text>
</comment>
<proteinExistence type="inferred from homology"/>